<feature type="chain" id="PRO_0000263194" description="Aspartate/glutamate leucyltransferase">
    <location>
        <begin position="1"/>
        <end position="257"/>
    </location>
</feature>
<sequence>MTQHSRDTPQFYLTAPSPCPYLPDRSERKVFTHLVGEKAGELNDLLTHGGFRRSQSIAYRPACDQCRACVSVRVIAGEFRPSRNFRKVLARNADIVSQLRAATPTSEQYSIFRAYLDQRHRDGGMADMTVLDYAMMVEDSHVETRIIEYRRRGADSDINERGDLVGVALTDVLSDGLSMVYSFFEPSEQNRSLGTFMILDHISRARQLGLPYVYLGYWIEGSRKMDYKGRFMPQQRLAPTGWLRVDAKDESQHESRD</sequence>
<accession>Q1QL63</accession>
<reference key="1">
    <citation type="submission" date="2006-03" db="EMBL/GenBank/DDBJ databases">
        <title>Complete sequence of chromosome of Nitrobacter hamburgensis X14.</title>
        <authorList>
            <consortium name="US DOE Joint Genome Institute"/>
            <person name="Copeland A."/>
            <person name="Lucas S."/>
            <person name="Lapidus A."/>
            <person name="Barry K."/>
            <person name="Detter J.C."/>
            <person name="Glavina del Rio T."/>
            <person name="Hammon N."/>
            <person name="Israni S."/>
            <person name="Dalin E."/>
            <person name="Tice H."/>
            <person name="Pitluck S."/>
            <person name="Chain P."/>
            <person name="Malfatti S."/>
            <person name="Shin M."/>
            <person name="Vergez L."/>
            <person name="Schmutz J."/>
            <person name="Larimer F."/>
            <person name="Land M."/>
            <person name="Hauser L."/>
            <person name="Kyrpides N."/>
            <person name="Ivanova N."/>
            <person name="Ward B."/>
            <person name="Arp D."/>
            <person name="Klotz M."/>
            <person name="Stein L."/>
            <person name="O'Mullan G."/>
            <person name="Starkenburg S."/>
            <person name="Sayavedra L."/>
            <person name="Poret-Peterson A.T."/>
            <person name="Gentry M.E."/>
            <person name="Bruce D."/>
            <person name="Richardson P."/>
        </authorList>
    </citation>
    <scope>NUCLEOTIDE SEQUENCE [LARGE SCALE GENOMIC DNA]</scope>
    <source>
        <strain>DSM 10229 / NCIMB 13809 / X14</strain>
    </source>
</reference>
<gene>
    <name evidence="1" type="primary">bpt</name>
    <name type="ordered locus">Nham_2242</name>
</gene>
<name>BPT_NITHX</name>
<dbReference type="EC" id="2.3.2.29" evidence="1"/>
<dbReference type="EMBL" id="CP000319">
    <property type="protein sequence ID" value="ABE63034.1"/>
    <property type="molecule type" value="Genomic_DNA"/>
</dbReference>
<dbReference type="RefSeq" id="WP_011510711.1">
    <property type="nucleotide sequence ID" value="NC_007964.1"/>
</dbReference>
<dbReference type="SMR" id="Q1QL63"/>
<dbReference type="STRING" id="323097.Nham_2242"/>
<dbReference type="KEGG" id="nha:Nham_2242"/>
<dbReference type="eggNOG" id="COG2935">
    <property type="taxonomic scope" value="Bacteria"/>
</dbReference>
<dbReference type="HOGENOM" id="CLU_077607_1_0_5"/>
<dbReference type="OrthoDB" id="9782022at2"/>
<dbReference type="Proteomes" id="UP000001953">
    <property type="component" value="Chromosome"/>
</dbReference>
<dbReference type="GO" id="GO:0005737">
    <property type="term" value="C:cytoplasm"/>
    <property type="evidence" value="ECO:0007669"/>
    <property type="project" value="UniProtKB-SubCell"/>
</dbReference>
<dbReference type="GO" id="GO:0004057">
    <property type="term" value="F:arginyl-tRNA--protein transferase activity"/>
    <property type="evidence" value="ECO:0007669"/>
    <property type="project" value="InterPro"/>
</dbReference>
<dbReference type="GO" id="GO:0008914">
    <property type="term" value="F:leucyl-tRNA--protein transferase activity"/>
    <property type="evidence" value="ECO:0007669"/>
    <property type="project" value="UniProtKB-UniRule"/>
</dbReference>
<dbReference type="GO" id="GO:0071596">
    <property type="term" value="P:ubiquitin-dependent protein catabolic process via the N-end rule pathway"/>
    <property type="evidence" value="ECO:0007669"/>
    <property type="project" value="InterPro"/>
</dbReference>
<dbReference type="HAMAP" id="MF_00689">
    <property type="entry name" value="Bpt"/>
    <property type="match status" value="1"/>
</dbReference>
<dbReference type="InterPro" id="IPR016181">
    <property type="entry name" value="Acyl_CoA_acyltransferase"/>
</dbReference>
<dbReference type="InterPro" id="IPR017138">
    <property type="entry name" value="Asp_Glu_LeuTrfase"/>
</dbReference>
<dbReference type="InterPro" id="IPR030700">
    <property type="entry name" value="N-end_Aminoacyl_Trfase"/>
</dbReference>
<dbReference type="InterPro" id="IPR007472">
    <property type="entry name" value="N-end_Aminoacyl_Trfase_C"/>
</dbReference>
<dbReference type="InterPro" id="IPR007471">
    <property type="entry name" value="N-end_Aminoacyl_Trfase_N"/>
</dbReference>
<dbReference type="NCBIfam" id="NF002341">
    <property type="entry name" value="PRK01305.1-1"/>
    <property type="match status" value="1"/>
</dbReference>
<dbReference type="NCBIfam" id="NF002342">
    <property type="entry name" value="PRK01305.1-3"/>
    <property type="match status" value="1"/>
</dbReference>
<dbReference type="NCBIfam" id="NF002343">
    <property type="entry name" value="PRK01305.1-4"/>
    <property type="match status" value="1"/>
</dbReference>
<dbReference type="NCBIfam" id="NF002346">
    <property type="entry name" value="PRK01305.2-3"/>
    <property type="match status" value="1"/>
</dbReference>
<dbReference type="PANTHER" id="PTHR21367">
    <property type="entry name" value="ARGININE-TRNA-PROTEIN TRANSFERASE 1"/>
    <property type="match status" value="1"/>
</dbReference>
<dbReference type="PANTHER" id="PTHR21367:SF1">
    <property type="entry name" value="ARGINYL-TRNA--PROTEIN TRANSFERASE 1"/>
    <property type="match status" value="1"/>
</dbReference>
<dbReference type="Pfam" id="PF04377">
    <property type="entry name" value="ATE_C"/>
    <property type="match status" value="1"/>
</dbReference>
<dbReference type="Pfam" id="PF04376">
    <property type="entry name" value="ATE_N"/>
    <property type="match status" value="1"/>
</dbReference>
<dbReference type="PIRSF" id="PIRSF037208">
    <property type="entry name" value="ATE_pro_prd"/>
    <property type="match status" value="1"/>
</dbReference>
<dbReference type="SUPFAM" id="SSF55729">
    <property type="entry name" value="Acyl-CoA N-acyltransferases (Nat)"/>
    <property type="match status" value="1"/>
</dbReference>
<comment type="function">
    <text evidence="1">Functions in the N-end rule pathway of protein degradation where it conjugates Leu from its aminoacyl-tRNA to the N-termini of proteins containing an N-terminal aspartate or glutamate.</text>
</comment>
<comment type="catalytic activity">
    <reaction evidence="1">
        <text>N-terminal L-glutamyl-[protein] + L-leucyl-tRNA(Leu) = N-terminal L-leucyl-L-glutamyl-[protein] + tRNA(Leu) + H(+)</text>
        <dbReference type="Rhea" id="RHEA:50412"/>
        <dbReference type="Rhea" id="RHEA-COMP:9613"/>
        <dbReference type="Rhea" id="RHEA-COMP:9622"/>
        <dbReference type="Rhea" id="RHEA-COMP:12664"/>
        <dbReference type="Rhea" id="RHEA-COMP:12668"/>
        <dbReference type="ChEBI" id="CHEBI:15378"/>
        <dbReference type="ChEBI" id="CHEBI:64721"/>
        <dbReference type="ChEBI" id="CHEBI:78442"/>
        <dbReference type="ChEBI" id="CHEBI:78494"/>
        <dbReference type="ChEBI" id="CHEBI:133041"/>
        <dbReference type="EC" id="2.3.2.29"/>
    </reaction>
</comment>
<comment type="catalytic activity">
    <reaction evidence="1">
        <text>N-terminal L-aspartyl-[protein] + L-leucyl-tRNA(Leu) = N-terminal L-leucyl-L-aspartyl-[protein] + tRNA(Leu) + H(+)</text>
        <dbReference type="Rhea" id="RHEA:50420"/>
        <dbReference type="Rhea" id="RHEA-COMP:9613"/>
        <dbReference type="Rhea" id="RHEA-COMP:9622"/>
        <dbReference type="Rhea" id="RHEA-COMP:12669"/>
        <dbReference type="Rhea" id="RHEA-COMP:12674"/>
        <dbReference type="ChEBI" id="CHEBI:15378"/>
        <dbReference type="ChEBI" id="CHEBI:64720"/>
        <dbReference type="ChEBI" id="CHEBI:78442"/>
        <dbReference type="ChEBI" id="CHEBI:78494"/>
        <dbReference type="ChEBI" id="CHEBI:133042"/>
        <dbReference type="EC" id="2.3.2.29"/>
    </reaction>
</comment>
<comment type="subcellular location">
    <subcellularLocation>
        <location evidence="1">Cytoplasm</location>
    </subcellularLocation>
</comment>
<comment type="similarity">
    <text evidence="1">Belongs to the R-transferase family. Bpt subfamily.</text>
</comment>
<protein>
    <recommendedName>
        <fullName evidence="1">Aspartate/glutamate leucyltransferase</fullName>
        <ecNumber evidence="1">2.3.2.29</ecNumber>
    </recommendedName>
</protein>
<evidence type="ECO:0000255" key="1">
    <source>
        <dbReference type="HAMAP-Rule" id="MF_00689"/>
    </source>
</evidence>
<keyword id="KW-0012">Acyltransferase</keyword>
<keyword id="KW-0963">Cytoplasm</keyword>
<keyword id="KW-1185">Reference proteome</keyword>
<keyword id="KW-0808">Transferase</keyword>
<proteinExistence type="inferred from homology"/>
<organism>
    <name type="scientific">Nitrobacter hamburgensis (strain DSM 10229 / NCIMB 13809 / X14)</name>
    <dbReference type="NCBI Taxonomy" id="323097"/>
    <lineage>
        <taxon>Bacteria</taxon>
        <taxon>Pseudomonadati</taxon>
        <taxon>Pseudomonadota</taxon>
        <taxon>Alphaproteobacteria</taxon>
        <taxon>Hyphomicrobiales</taxon>
        <taxon>Nitrobacteraceae</taxon>
        <taxon>Nitrobacter</taxon>
    </lineage>
</organism>